<dbReference type="EMBL" id="AF053927">
    <property type="protein sequence ID" value="AAC08015.1"/>
    <property type="molecule type" value="Genomic_DNA"/>
</dbReference>
<dbReference type="RefSeq" id="WP_001052807.1">
    <property type="nucleotide sequence ID" value="NZ_WBPO01000030.1"/>
</dbReference>
<dbReference type="GeneID" id="92800387"/>
<dbReference type="OMA" id="VHIGDIH"/>
<dbReference type="OrthoDB" id="2455313at2"/>
<dbReference type="GO" id="GO:0030435">
    <property type="term" value="P:sporulation resulting in formation of a cellular spore"/>
    <property type="evidence" value="ECO:0007669"/>
    <property type="project" value="UniProtKB-KW"/>
</dbReference>
<dbReference type="InterPro" id="IPR017257">
    <property type="entry name" value="Spore_germination_GerPD_prd"/>
</dbReference>
<dbReference type="PIRSF" id="PIRSF037666">
    <property type="entry name" value="GerPD_prd"/>
    <property type="match status" value="1"/>
</dbReference>
<sequence length="64" mass="6781">MNLNVVNRELKVGQIKMNGVSSSALFLIGDANLLILSSILDTPFETVTEGPFVPLVTDVPPTPG</sequence>
<reference key="1">
    <citation type="journal article" date="2000" name="J. Bacteriol.">
        <title>Mutations in the gerP locus of Bacillus subtilis and Bacillus cereus affect access of germinants to their targets in spores.</title>
        <authorList>
            <person name="Behravan J."/>
            <person name="Chirakkal H."/>
            <person name="Masson A."/>
            <person name="Moir A."/>
        </authorList>
    </citation>
    <scope>NUCLEOTIDE SEQUENCE [GENOMIC DNA]</scope>
    <scope>CHARACTERIZATION</scope>
    <source>
        <strain>ATCC 10876 / DSM 9378 / NRRL B-569</strain>
    </source>
</reference>
<keyword id="KW-0309">Germination</keyword>
<keyword id="KW-0749">Sporulation</keyword>
<name>GERPD_BACCE</name>
<protein>
    <recommendedName>
        <fullName>Probable spore germination protein GerPD</fullName>
    </recommendedName>
</protein>
<gene>
    <name type="primary">gerPD</name>
</gene>
<proteinExistence type="evidence at protein level"/>
<feature type="chain" id="PRO_0000087471" description="Probable spore germination protein GerPD">
    <location>
        <begin position="1"/>
        <end position="64"/>
    </location>
</feature>
<accession>P0A3T9</accession>
<accession>O68686</accession>
<comment type="function">
    <text>Required for the formation of functionally normal spores. Could be involved in the establishment of normal spore coat structure and/or permeability, which allows the access of germinants to their receptor.</text>
</comment>
<comment type="developmental stage">
    <text>Expressed during sporulation, around the time of spore coat synthesis and assembly, in mother cell compartment.</text>
</comment>
<comment type="induction">
    <text>Expression is sigma K-dependent and negatively regulated by GerE.</text>
</comment>
<organism>
    <name type="scientific">Bacillus cereus</name>
    <dbReference type="NCBI Taxonomy" id="1396"/>
    <lineage>
        <taxon>Bacteria</taxon>
        <taxon>Bacillati</taxon>
        <taxon>Bacillota</taxon>
        <taxon>Bacilli</taxon>
        <taxon>Bacillales</taxon>
        <taxon>Bacillaceae</taxon>
        <taxon>Bacillus</taxon>
        <taxon>Bacillus cereus group</taxon>
    </lineage>
</organism>